<name>PSBX_PROM4</name>
<reference key="1">
    <citation type="journal article" date="2007" name="PLoS Genet.">
        <title>Patterns and implications of gene gain and loss in the evolution of Prochlorococcus.</title>
        <authorList>
            <person name="Kettler G.C."/>
            <person name="Martiny A.C."/>
            <person name="Huang K."/>
            <person name="Zucker J."/>
            <person name="Coleman M.L."/>
            <person name="Rodrigue S."/>
            <person name="Chen F."/>
            <person name="Lapidus A."/>
            <person name="Ferriera S."/>
            <person name="Johnson J."/>
            <person name="Steglich C."/>
            <person name="Church G.M."/>
            <person name="Richardson P."/>
            <person name="Chisholm S.W."/>
        </authorList>
    </citation>
    <scope>NUCLEOTIDE SEQUENCE [LARGE SCALE GENOMIC DNA]</scope>
    <source>
        <strain>MIT 9211</strain>
    </source>
</reference>
<accession>A9B9C4</accession>
<keyword id="KW-0472">Membrane</keyword>
<keyword id="KW-0602">Photosynthesis</keyword>
<keyword id="KW-0604">Photosystem II</keyword>
<keyword id="KW-1185">Reference proteome</keyword>
<keyword id="KW-0793">Thylakoid</keyword>
<keyword id="KW-0812">Transmembrane</keyword>
<keyword id="KW-1133">Transmembrane helix</keyword>
<sequence>MAFPVLNLLLDVAVSSEAATNSAIGMIGSFLAAAAFIVVPAASFLIWVSQKDALERKR</sequence>
<evidence type="ECO:0000255" key="1">
    <source>
        <dbReference type="HAMAP-Rule" id="MF_01388"/>
    </source>
</evidence>
<feature type="chain" id="PRO_0000345369" description="Photosystem II reaction center X protein">
    <location>
        <begin position="1"/>
        <end position="58"/>
    </location>
</feature>
<feature type="transmembrane region" description="Helical" evidence="1">
    <location>
        <begin position="27"/>
        <end position="47"/>
    </location>
</feature>
<dbReference type="EMBL" id="CP000878">
    <property type="protein sequence ID" value="ABX08001.1"/>
    <property type="molecule type" value="Genomic_DNA"/>
</dbReference>
<dbReference type="RefSeq" id="WP_012194626.1">
    <property type="nucleotide sequence ID" value="NC_009976.1"/>
</dbReference>
<dbReference type="SMR" id="A9B9C4"/>
<dbReference type="STRING" id="93059.P9211_00701"/>
<dbReference type="KEGG" id="pmj:P9211_00701"/>
<dbReference type="eggNOG" id="ENOG5032E6T">
    <property type="taxonomic scope" value="Bacteria"/>
</dbReference>
<dbReference type="HOGENOM" id="CLU_209178_0_0_3"/>
<dbReference type="OrthoDB" id="541645at2"/>
<dbReference type="Proteomes" id="UP000000788">
    <property type="component" value="Chromosome"/>
</dbReference>
<dbReference type="GO" id="GO:0009523">
    <property type="term" value="C:photosystem II"/>
    <property type="evidence" value="ECO:0007669"/>
    <property type="project" value="UniProtKB-KW"/>
</dbReference>
<dbReference type="GO" id="GO:0031676">
    <property type="term" value="C:plasma membrane-derived thylakoid membrane"/>
    <property type="evidence" value="ECO:0007669"/>
    <property type="project" value="UniProtKB-SubCell"/>
</dbReference>
<dbReference type="GO" id="GO:0015979">
    <property type="term" value="P:photosynthesis"/>
    <property type="evidence" value="ECO:0007669"/>
    <property type="project" value="UniProtKB-KW"/>
</dbReference>
<dbReference type="HAMAP" id="MF_01388">
    <property type="entry name" value="PSII_PsbX_2"/>
    <property type="match status" value="1"/>
</dbReference>
<dbReference type="InterPro" id="IPR009518">
    <property type="entry name" value="PSII_PsbX"/>
</dbReference>
<dbReference type="InterPro" id="IPR023428">
    <property type="entry name" value="PSII_PsbX_type_2_subfam"/>
</dbReference>
<dbReference type="Pfam" id="PF06596">
    <property type="entry name" value="PsbX"/>
    <property type="match status" value="1"/>
</dbReference>
<comment type="function">
    <text evidence="1">Involved in the binding and/or turnover of quinones at the Q(B) site of Photosystem II.</text>
</comment>
<comment type="subunit">
    <text evidence="1">PSII consists of a core antenna complex that captures photons, and an electron transfer chain that converts photonic excitation into a charge separation. PSII forms dimeric complexes.</text>
</comment>
<comment type="subcellular location">
    <subcellularLocation>
        <location evidence="1">Cellular thylakoid membrane</location>
        <topology evidence="1">Single-pass membrane protein</topology>
    </subcellularLocation>
</comment>
<comment type="similarity">
    <text evidence="1">Belongs to the PsbX family. Type 2 subfamily.</text>
</comment>
<organism>
    <name type="scientific">Prochlorococcus marinus (strain MIT 9211)</name>
    <dbReference type="NCBI Taxonomy" id="93059"/>
    <lineage>
        <taxon>Bacteria</taxon>
        <taxon>Bacillati</taxon>
        <taxon>Cyanobacteriota</taxon>
        <taxon>Cyanophyceae</taxon>
        <taxon>Synechococcales</taxon>
        <taxon>Prochlorococcaceae</taxon>
        <taxon>Prochlorococcus</taxon>
    </lineage>
</organism>
<proteinExistence type="inferred from homology"/>
<gene>
    <name evidence="1" type="primary">psbX</name>
    <name type="ordered locus">P9211_00701</name>
</gene>
<protein>
    <recommendedName>
        <fullName evidence="1">Photosystem II reaction center X protein</fullName>
    </recommendedName>
</protein>